<proteinExistence type="inferred from homology"/>
<keyword id="KW-1003">Cell membrane</keyword>
<keyword id="KW-0449">Lipoprotein</keyword>
<keyword id="KW-0472">Membrane</keyword>
<keyword id="KW-0564">Palmitate</keyword>
<keyword id="KW-0571">Peptide transport</keyword>
<keyword id="KW-0653">Protein transport</keyword>
<keyword id="KW-1185">Reference proteome</keyword>
<keyword id="KW-0732">Signal</keyword>
<keyword id="KW-0813">Transport</keyword>
<feature type="signal peptide" evidence="1">
    <location>
        <begin position="1"/>
        <end position="24"/>
    </location>
</feature>
<feature type="chain" id="PRO_0000031785" description="Oligopeptide-binding protein AliB">
    <location>
        <begin position="25"/>
        <end position="652"/>
    </location>
</feature>
<feature type="lipid moiety-binding region" description="N-palmitoyl cysteine" evidence="1">
    <location>
        <position position="25"/>
    </location>
</feature>
<feature type="lipid moiety-binding region" description="S-diacylglycerol cysteine" evidence="1">
    <location>
        <position position="25"/>
    </location>
</feature>
<feature type="sequence conflict" description="In Ref. 1; CAA78896." evidence="1" ref="1">
    <original>A</original>
    <variation>R</variation>
    <location>
        <position position="55"/>
    </location>
</feature>
<feature type="sequence conflict" description="In Ref. 1; CAA78896." evidence="1" ref="1">
    <original>SL</original>
    <variation>HI</variation>
    <location>
        <begin position="79"/>
        <end position="80"/>
    </location>
</feature>
<feature type="sequence conflict" description="In Ref. 1; CAA78896." evidence="1" ref="1">
    <original>LQ</original>
    <variation>FE</variation>
    <location>
        <begin position="123"/>
        <end position="124"/>
    </location>
</feature>
<feature type="sequence conflict" description="In Ref. 1; CAA78896." evidence="1" ref="1">
    <original>G</original>
    <variation>E</variation>
    <location>
        <position position="501"/>
    </location>
</feature>
<comment type="function">
    <text>Part of the binding-protein-dependent transport system for oligopeptides; probably an oligopeptide binding protein.</text>
</comment>
<comment type="subcellular location">
    <subcellularLocation>
        <location evidence="1">Cell membrane</location>
        <topology evidence="1">Lipid-anchor</topology>
    </subcellularLocation>
</comment>
<comment type="similarity">
    <text evidence="1">Belongs to the bacterial solute-binding protein 5 family.</text>
</comment>
<evidence type="ECO:0000305" key="1"/>
<organism>
    <name type="scientific">Streptococcus pneumoniae serotype 4 (strain ATCC BAA-334 / TIGR4)</name>
    <dbReference type="NCBI Taxonomy" id="170187"/>
    <lineage>
        <taxon>Bacteria</taxon>
        <taxon>Bacillati</taxon>
        <taxon>Bacillota</taxon>
        <taxon>Bacilli</taxon>
        <taxon>Lactobacillales</taxon>
        <taxon>Streptococcaceae</taxon>
        <taxon>Streptococcus</taxon>
    </lineage>
</organism>
<name>ALIB_STRPN</name>
<accession>P0A4G0</accession>
<accession>Q51933</accession>
<dbReference type="EMBL" id="Z16082">
    <property type="protein sequence ID" value="CAA78896.1"/>
    <property type="molecule type" value="Genomic_DNA"/>
</dbReference>
<dbReference type="EMBL" id="AE005672">
    <property type="protein sequence ID" value="AAK75616.1"/>
    <property type="molecule type" value="Genomic_DNA"/>
</dbReference>
<dbReference type="PIR" id="G95177">
    <property type="entry name" value="G95177"/>
</dbReference>
<dbReference type="PIR" id="S47979">
    <property type="entry name" value="S47979"/>
</dbReference>
<dbReference type="RefSeq" id="WP_000748873.1">
    <property type="nucleotide sequence ID" value="NZ_CP155539.1"/>
</dbReference>
<dbReference type="SMR" id="P0A4G0"/>
<dbReference type="PaxDb" id="170187-SP_1527"/>
<dbReference type="EnsemblBacteria" id="AAK75616">
    <property type="protein sequence ID" value="AAK75616"/>
    <property type="gene ID" value="SP_1527"/>
</dbReference>
<dbReference type="KEGG" id="spn:SP_1527"/>
<dbReference type="eggNOG" id="COG4166">
    <property type="taxonomic scope" value="Bacteria"/>
</dbReference>
<dbReference type="PhylomeDB" id="P0A4G0"/>
<dbReference type="BioCyc" id="SPNE170187:G1FZB-1546-MONOMER"/>
<dbReference type="Proteomes" id="UP000000585">
    <property type="component" value="Chromosome"/>
</dbReference>
<dbReference type="GO" id="GO:0043190">
    <property type="term" value="C:ATP-binding cassette (ABC) transporter complex"/>
    <property type="evidence" value="ECO:0007669"/>
    <property type="project" value="InterPro"/>
</dbReference>
<dbReference type="GO" id="GO:0042597">
    <property type="term" value="C:periplasmic space"/>
    <property type="evidence" value="ECO:0007669"/>
    <property type="project" value="UniProtKB-ARBA"/>
</dbReference>
<dbReference type="GO" id="GO:1904680">
    <property type="term" value="F:peptide transmembrane transporter activity"/>
    <property type="evidence" value="ECO:0007669"/>
    <property type="project" value="TreeGrafter"/>
</dbReference>
<dbReference type="GO" id="GO:0015833">
    <property type="term" value="P:peptide transport"/>
    <property type="evidence" value="ECO:0007669"/>
    <property type="project" value="UniProtKB-KW"/>
</dbReference>
<dbReference type="GO" id="GO:0015031">
    <property type="term" value="P:protein transport"/>
    <property type="evidence" value="ECO:0007669"/>
    <property type="project" value="UniProtKB-KW"/>
</dbReference>
<dbReference type="CDD" id="cd08504">
    <property type="entry name" value="PBP2_OppA"/>
    <property type="match status" value="1"/>
</dbReference>
<dbReference type="FunFam" id="3.10.105.10:FF:000013">
    <property type="entry name" value="Oligopeptide ABC transporter, oligopeptide-binding protein AliB"/>
    <property type="match status" value="1"/>
</dbReference>
<dbReference type="FunFam" id="3.40.190.10:FF:000273">
    <property type="entry name" value="Oligopeptide ABC transporter, oligopeptide-binding protein AliB"/>
    <property type="match status" value="1"/>
</dbReference>
<dbReference type="Gene3D" id="3.10.105.10">
    <property type="entry name" value="Dipeptide-binding Protein, Domain 3"/>
    <property type="match status" value="1"/>
</dbReference>
<dbReference type="Gene3D" id="3.40.190.10">
    <property type="entry name" value="Periplasmic binding protein-like II"/>
    <property type="match status" value="1"/>
</dbReference>
<dbReference type="InterPro" id="IPR030678">
    <property type="entry name" value="Peptide/Ni-bd"/>
</dbReference>
<dbReference type="InterPro" id="IPR039424">
    <property type="entry name" value="SBP_5"/>
</dbReference>
<dbReference type="InterPro" id="IPR023765">
    <property type="entry name" value="SBP_5_CS"/>
</dbReference>
<dbReference type="InterPro" id="IPR000914">
    <property type="entry name" value="SBP_5_dom"/>
</dbReference>
<dbReference type="PANTHER" id="PTHR30290">
    <property type="entry name" value="PERIPLASMIC BINDING COMPONENT OF ABC TRANSPORTER"/>
    <property type="match status" value="1"/>
</dbReference>
<dbReference type="PANTHER" id="PTHR30290:SF10">
    <property type="entry name" value="PERIPLASMIC OLIGOPEPTIDE-BINDING PROTEIN-RELATED"/>
    <property type="match status" value="1"/>
</dbReference>
<dbReference type="Pfam" id="PF00496">
    <property type="entry name" value="SBP_bac_5"/>
    <property type="match status" value="1"/>
</dbReference>
<dbReference type="PIRSF" id="PIRSF002741">
    <property type="entry name" value="MppA"/>
    <property type="match status" value="1"/>
</dbReference>
<dbReference type="SUPFAM" id="SSF53850">
    <property type="entry name" value="Periplasmic binding protein-like II"/>
    <property type="match status" value="1"/>
</dbReference>
<dbReference type="PROSITE" id="PS51257">
    <property type="entry name" value="PROKAR_LIPOPROTEIN"/>
    <property type="match status" value="1"/>
</dbReference>
<dbReference type="PROSITE" id="PS01040">
    <property type="entry name" value="SBP_BACTERIAL_5"/>
    <property type="match status" value="1"/>
</dbReference>
<sequence>MKKSKSKYLTLAGLVLGTGVLLSACGNSSTASKTYNYVYSSDPSSLNYLAENRAATSDIVANLVDGLLENDQYGNIIPSLAEDWTVSQDGLTYTYKLRKDAKWFTSEGEEYAPVTAQDFVTGLQYAADKKSEALYLVQDSVAGLDDYITGKTSDFSTVGVKALDDQTVQYTLVKPELYWNSKTLATILFPVNADFLKSKGDDFGKADPSSILYNGPFLMKALVSKSAIEYKKNPNYWDAKNVFVDDVKLTYYDGSDQESLERNFTAGAYTTARLFPNSSSYEGIKEKYKNNIIYSMQNSTSYFFNFNLDRKSYNYTSKTSDIEKKSTQEAVLNKNFRQAINFAFDRTSYGAQSEGKEGATKILRNLVVPPNFVSIKGKDFGEVVASKMVNYGKEWQGINFADGQDPYYNPEKAKAKFAEAKKELEAKGVQFPIHLDKTVEVTDKVGIQGVSSIKQSIESVLGSDNVVIDIQQLTSDEFDSSGYFAQTAAQKDYDLYHGGWGPDYQDPSTYLDIFNTNSGGFLQNLGLEPGEANDKAKAVGLDVYTQMLEEANKEQDPAKRYEKYADIQAWLIDSSLVLPSVSRGGTPSLRRTVPFAAAYGLTGTKGVESYKYLKVQDKIVTTDEYAKAREKWLKEKEESNKKAQEELAKHVK</sequence>
<protein>
    <recommendedName>
        <fullName>Oligopeptide-binding protein AliB</fullName>
    </recommendedName>
</protein>
<gene>
    <name type="primary">aliB</name>
    <name type="ordered locus">SP_1527</name>
</gene>
<reference key="1">
    <citation type="journal article" date="1994" name="J. Mol. Biol.">
        <title>Three highly homologous membrane-bound lipoproteins participate in oligopeptide transport by the Ami system of the Gram-positive Streptococcus pneumoniae.</title>
        <authorList>
            <person name="Alloing G."/>
            <person name="de Philip P."/>
            <person name="Claverys J.-P."/>
        </authorList>
    </citation>
    <scope>NUCLEOTIDE SEQUENCE [GENOMIC DNA]</scope>
    <source>
        <strain>R6 / R800</strain>
    </source>
</reference>
<reference key="2">
    <citation type="journal article" date="2001" name="Science">
        <title>Complete genome sequence of a virulent isolate of Streptococcus pneumoniae.</title>
        <authorList>
            <person name="Tettelin H."/>
            <person name="Nelson K.E."/>
            <person name="Paulsen I.T."/>
            <person name="Eisen J.A."/>
            <person name="Read T.D."/>
            <person name="Peterson S.N."/>
            <person name="Heidelberg J.F."/>
            <person name="DeBoy R.T."/>
            <person name="Haft D.H."/>
            <person name="Dodson R.J."/>
            <person name="Durkin A.S."/>
            <person name="Gwinn M.L."/>
            <person name="Kolonay J.F."/>
            <person name="Nelson W.C."/>
            <person name="Peterson J.D."/>
            <person name="Umayam L.A."/>
            <person name="White O."/>
            <person name="Salzberg S.L."/>
            <person name="Lewis M.R."/>
            <person name="Radune D."/>
            <person name="Holtzapple E.K."/>
            <person name="Khouri H.M."/>
            <person name="Wolf A.M."/>
            <person name="Utterback T.R."/>
            <person name="Hansen C.L."/>
            <person name="McDonald L.A."/>
            <person name="Feldblyum T.V."/>
            <person name="Angiuoli S.V."/>
            <person name="Dickinson T."/>
            <person name="Hickey E.K."/>
            <person name="Holt I.E."/>
            <person name="Loftus B.J."/>
            <person name="Yang F."/>
            <person name="Smith H.O."/>
            <person name="Venter J.C."/>
            <person name="Dougherty B.A."/>
            <person name="Morrison D.A."/>
            <person name="Hollingshead S.K."/>
            <person name="Fraser C.M."/>
        </authorList>
    </citation>
    <scope>NUCLEOTIDE SEQUENCE [LARGE SCALE GENOMIC DNA]</scope>
    <source>
        <strain>ATCC BAA-334 / TIGR4</strain>
    </source>
</reference>